<feature type="chain" id="PRO_0000278294" description="KAT8 regulatory NSL complex subunit 2">
    <location>
        <begin position="1"/>
        <end position="492"/>
    </location>
</feature>
<feature type="region of interest" description="Disordered" evidence="4">
    <location>
        <begin position="127"/>
        <end position="182"/>
    </location>
</feature>
<feature type="region of interest" description="Required for interaction with other NSL complex members" evidence="2">
    <location>
        <begin position="308"/>
        <end position="364"/>
    </location>
</feature>
<feature type="region of interest" description="Disordered" evidence="4">
    <location>
        <begin position="455"/>
        <end position="492"/>
    </location>
</feature>
<feature type="compositionally biased region" description="Basic and acidic residues" evidence="4">
    <location>
        <begin position="135"/>
        <end position="144"/>
    </location>
</feature>
<feature type="compositionally biased region" description="Acidic residues" evidence="4">
    <location>
        <begin position="167"/>
        <end position="178"/>
    </location>
</feature>
<feature type="modified residue" description="Phosphothreonine" evidence="3">
    <location>
        <position position="131"/>
    </location>
</feature>
<feature type="modified residue" description="Phosphoserine" evidence="3">
    <location>
        <position position="147"/>
    </location>
</feature>
<feature type="modified residue" description="Phosphoserine" evidence="3">
    <location>
        <position position="149"/>
    </location>
</feature>
<feature type="modified residue" description="Phosphoserine" evidence="1">
    <location>
        <position position="168"/>
    </location>
</feature>
<feature type="modified residue" description="Phosphoserine" evidence="1">
    <location>
        <position position="172"/>
    </location>
</feature>
<feature type="modified residue" description="Phosphoserine" evidence="1">
    <location>
        <position position="175"/>
    </location>
</feature>
<feature type="cross-link" description="Glycyl lysine isopeptide (Lys-Gly) (interchain with G-Cter in SUMO2)" evidence="3">
    <location>
        <position position="78"/>
    </location>
</feature>
<reference key="1">
    <citation type="submission" date="2004-11" db="EMBL/GenBank/DDBJ databases">
        <authorList>
            <consortium name="The German cDNA consortium"/>
        </authorList>
    </citation>
    <scope>NUCLEOTIDE SEQUENCE [LARGE SCALE MRNA]</scope>
    <source>
        <tissue>Kidney</tissue>
    </source>
</reference>
<protein>
    <recommendedName>
        <fullName>KAT8 regulatory NSL complex subunit 2</fullName>
    </recommendedName>
    <alternativeName>
        <fullName>NSL complex protein NSL2</fullName>
    </alternativeName>
    <alternativeName>
        <fullName>Non-specific lethal 2 homolog</fullName>
    </alternativeName>
</protein>
<accession>Q5R802</accession>
<evidence type="ECO:0000250" key="1">
    <source>
        <dbReference type="UniProtKB" id="Q6AY70"/>
    </source>
</evidence>
<evidence type="ECO:0000250" key="2">
    <source>
        <dbReference type="UniProtKB" id="Q8BQR4"/>
    </source>
</evidence>
<evidence type="ECO:0000250" key="3">
    <source>
        <dbReference type="UniProtKB" id="Q9H9L4"/>
    </source>
</evidence>
<evidence type="ECO:0000256" key="4">
    <source>
        <dbReference type="SAM" id="MobiDB-lite"/>
    </source>
</evidence>
<name>KANL2_PONAB</name>
<keyword id="KW-0156">Chromatin regulator</keyword>
<keyword id="KW-1017">Isopeptide bond</keyword>
<keyword id="KW-0496">Mitochondrion</keyword>
<keyword id="KW-0539">Nucleus</keyword>
<keyword id="KW-0597">Phosphoprotein</keyword>
<keyword id="KW-1185">Reference proteome</keyword>
<keyword id="KW-0832">Ubl conjugation</keyword>
<sequence length="492" mass="55052">MNRIRIHVLPTNRGRITPVPRSQEPLSCAFTHRPCSQPRLEGQEFCIKHILEDKDAPFKQCSYISTKNGKRCPNAAPKPEKKDGVSFCAEHVRRNALALHAQMKKTNPGPMGETLLCQLSSYAKTELGSQTPESSRSEASRILDEDSWSDGEQEPITVDQTWRGDPDSEADSIDSDQEDPLKHAGVYTAEEVALIMREKLIRLQSLYIDQFKRLQHLLKEKKRRYLHNRKVEHEALGSSLLTGPEGLLAKERENLKRLKCLRRYRQRYGVEALLHRQLKERRMLATDGAAQQAHTTRSSQRCLAFVDDVRCSNQSLPMTRHCLTHICQDTNQVLFKCCQGSEEVPCNKPVPVSLSEDPCCPLHFQLPPQMYKPEQVLSVPDDLEAGPMDLYLSAAELQPTESLPLEFSDDLDVVGDGMQCPPSPLLFDPSLTLEDHLVKEIAEDPVDILGQMQMAGDGCRSQGSRNSEKGSAPLSQSGLATANGKPEPTSIS</sequence>
<organism>
    <name type="scientific">Pongo abelii</name>
    <name type="common">Sumatran orangutan</name>
    <name type="synonym">Pongo pygmaeus abelii</name>
    <dbReference type="NCBI Taxonomy" id="9601"/>
    <lineage>
        <taxon>Eukaryota</taxon>
        <taxon>Metazoa</taxon>
        <taxon>Chordata</taxon>
        <taxon>Craniata</taxon>
        <taxon>Vertebrata</taxon>
        <taxon>Euteleostomi</taxon>
        <taxon>Mammalia</taxon>
        <taxon>Eutheria</taxon>
        <taxon>Euarchontoglires</taxon>
        <taxon>Primates</taxon>
        <taxon>Haplorrhini</taxon>
        <taxon>Catarrhini</taxon>
        <taxon>Hominidae</taxon>
        <taxon>Pongo</taxon>
    </lineage>
</organism>
<gene>
    <name type="primary">KANSL2</name>
    <name type="synonym">NSL2</name>
</gene>
<dbReference type="EMBL" id="CR859954">
    <property type="protein sequence ID" value="CAH92108.1"/>
    <property type="molecule type" value="mRNA"/>
</dbReference>
<dbReference type="RefSeq" id="NP_001126230.1">
    <property type="nucleotide sequence ID" value="NM_001132758.2"/>
</dbReference>
<dbReference type="SMR" id="Q5R802"/>
<dbReference type="FunCoup" id="Q5R802">
    <property type="interactions" value="3142"/>
</dbReference>
<dbReference type="STRING" id="9601.ENSPPYP00000005096"/>
<dbReference type="GeneID" id="100173200"/>
<dbReference type="KEGG" id="pon:100173200"/>
<dbReference type="CTD" id="54934"/>
<dbReference type="eggNOG" id="ENOG502QTMA">
    <property type="taxonomic scope" value="Eukaryota"/>
</dbReference>
<dbReference type="InParanoid" id="Q5R802"/>
<dbReference type="OrthoDB" id="677315at2759"/>
<dbReference type="Proteomes" id="UP000001595">
    <property type="component" value="Unplaced"/>
</dbReference>
<dbReference type="GO" id="GO:0000123">
    <property type="term" value="C:histone acetyltransferase complex"/>
    <property type="evidence" value="ECO:0000250"/>
    <property type="project" value="UniProtKB"/>
</dbReference>
<dbReference type="GO" id="GO:0005739">
    <property type="term" value="C:mitochondrion"/>
    <property type="evidence" value="ECO:0007669"/>
    <property type="project" value="UniProtKB-SubCell"/>
</dbReference>
<dbReference type="GO" id="GO:0044545">
    <property type="term" value="C:NSL complex"/>
    <property type="evidence" value="ECO:0007669"/>
    <property type="project" value="TreeGrafter"/>
</dbReference>
<dbReference type="GO" id="GO:0005634">
    <property type="term" value="C:nucleus"/>
    <property type="evidence" value="ECO:0007669"/>
    <property type="project" value="UniProtKB-SubCell"/>
</dbReference>
<dbReference type="GO" id="GO:0006325">
    <property type="term" value="P:chromatin organization"/>
    <property type="evidence" value="ECO:0007669"/>
    <property type="project" value="UniProtKB-KW"/>
</dbReference>
<dbReference type="InterPro" id="IPR026316">
    <property type="entry name" value="NSL2"/>
</dbReference>
<dbReference type="InterPro" id="IPR025927">
    <property type="entry name" value="Potential_DNA-bd"/>
</dbReference>
<dbReference type="PANTHER" id="PTHR13453">
    <property type="entry name" value="KAT8 REGULATORY NSL COMPLEX SUBUNIT 2"/>
    <property type="match status" value="1"/>
</dbReference>
<dbReference type="PANTHER" id="PTHR13453:SF1">
    <property type="entry name" value="KAT8 REGULATORY NSL COMPLEX SUBUNIT 2"/>
    <property type="match status" value="1"/>
</dbReference>
<dbReference type="Pfam" id="PF13891">
    <property type="entry name" value="zf-C3Hc3H"/>
    <property type="match status" value="2"/>
</dbReference>
<proteinExistence type="evidence at transcript level"/>
<comment type="function">
    <text evidence="2 3">Non-catalytic component of the NSL histone acetyltransferase complex, a multiprotein complex that mediates histone H4 acetylation at 'Lys-5'- and 'Lys-8' (H4K5ac and H4K8ac) at transcription start sites and promotes transcription initiation. Required for NSL complex stability and for transcription of intraciliary transport genes in both ciliated and non-ciliated cells by regulating histone H4 acetylation at 'Lys-5'- and 'Lys-12' (H4K5ac and H4K12ac). This is necessary for cilium assembly in ciliated cells and for organization of the microtubule cytoskeleton in non-ciliated cells. Required within the NSL complex to maintain nuclear architecture stability by promoting KAT8-mediated acetylation of lamin LMNA.</text>
</comment>
<comment type="subunit">
    <text evidence="3">Component of the NSL complex at least composed of KAT8/MOF, KANSL1, KANSL2, KANSL3, MCRS1, PHF20, OGT1/OGT, WDR5 and HCFC1.</text>
</comment>
<comment type="subcellular location">
    <subcellularLocation>
        <location evidence="3">Nucleus</location>
    </subcellularLocation>
    <subcellularLocation>
        <location evidence="2">Mitochondrion</location>
    </subcellularLocation>
</comment>